<sequence length="633" mass="71072">MRFVAGEYDVCVVGLGHAGSEAALASARLGLSTVGFATNLDAIALMACNPSIGGPAKAQLVREIDALGGQMAINTDKSLLQMRTLNTSKGPAVRSLRAQVDKKLYQMNMKHTLERQENLDIKQAEIVDILVEDNKVTGVVTKLGAIYKCKACIITTGTFLKGRVIIGEVDFESGPSGLFPASELSEALKRLGFKLMRFKTGTPPRVDKRSIDFSKMEIQPGDEVITPFSFMHDKIEIEQMPCWLTYTNEKTHKIIRDNIHRAPLFTGAITGVGVRYCPSIEDKVVKFPHRERHQIFIEPEGRDTYEMYVQGMSSSLPEDVQLEFLRTVPGLENVRVMRPAYAIEYDCIDPTQLKATLESKWIEGLYFAGQVNGTSGYEEAAAQGLMAGINAAMKILNKPPVVLDRSQAYIGILIDDLVTKGTNEPYRMLTSRAEYRLLLRQDNADFRLTEIGKEIGLVTEERYEKFLRKKIQLEKEMRRLSTVMVRPTEEVNNFLISRGSTPLVSGVDLYTLLKRPEVDYKSTKFLDPDRPDDILDSVAEQIDINIKYEGYILKQLRQVEQFKAMENKKIPEDIDYYQISGLSNEAKEKLSKIRPTSVGQASRISGVSPADISVLLIYLQQMRKKKSNESRIS</sequence>
<feature type="chain" id="PRO_0000117200" description="tRNA uridine 5-carboxymethylaminomethyl modification enzyme MnmG 1">
    <location>
        <begin position="1"/>
        <end position="633"/>
    </location>
</feature>
<feature type="binding site" evidence="1">
    <location>
        <begin position="14"/>
        <end position="19"/>
    </location>
    <ligand>
        <name>FAD</name>
        <dbReference type="ChEBI" id="CHEBI:57692"/>
    </ligand>
</feature>
<feature type="binding site" evidence="1">
    <location>
        <begin position="273"/>
        <end position="287"/>
    </location>
    <ligand>
        <name>NAD(+)</name>
        <dbReference type="ChEBI" id="CHEBI:57540"/>
    </ligand>
</feature>
<dbReference type="EMBL" id="AE008691">
    <property type="protein sequence ID" value="AAM24348.1"/>
    <property type="molecule type" value="Genomic_DNA"/>
</dbReference>
<dbReference type="RefSeq" id="WP_011025458.1">
    <property type="nucleotide sequence ID" value="NC_003869.1"/>
</dbReference>
<dbReference type="SMR" id="Q8RAT8"/>
<dbReference type="STRING" id="273068.TTE1110"/>
<dbReference type="KEGG" id="tte:TTE1110"/>
<dbReference type="eggNOG" id="COG0445">
    <property type="taxonomic scope" value="Bacteria"/>
</dbReference>
<dbReference type="HOGENOM" id="CLU_007831_2_2_9"/>
<dbReference type="OrthoDB" id="9815560at2"/>
<dbReference type="Proteomes" id="UP000000555">
    <property type="component" value="Chromosome"/>
</dbReference>
<dbReference type="GO" id="GO:0005829">
    <property type="term" value="C:cytosol"/>
    <property type="evidence" value="ECO:0007669"/>
    <property type="project" value="TreeGrafter"/>
</dbReference>
<dbReference type="GO" id="GO:0050660">
    <property type="term" value="F:flavin adenine dinucleotide binding"/>
    <property type="evidence" value="ECO:0007669"/>
    <property type="project" value="UniProtKB-UniRule"/>
</dbReference>
<dbReference type="GO" id="GO:0030488">
    <property type="term" value="P:tRNA methylation"/>
    <property type="evidence" value="ECO:0007669"/>
    <property type="project" value="TreeGrafter"/>
</dbReference>
<dbReference type="GO" id="GO:0002098">
    <property type="term" value="P:tRNA wobble uridine modification"/>
    <property type="evidence" value="ECO:0007669"/>
    <property type="project" value="InterPro"/>
</dbReference>
<dbReference type="FunFam" id="1.10.10.1800:FF:000001">
    <property type="entry name" value="tRNA uridine 5-carboxymethylaminomethyl modification enzyme MnmG"/>
    <property type="match status" value="1"/>
</dbReference>
<dbReference type="FunFam" id="1.10.150.570:FF:000001">
    <property type="entry name" value="tRNA uridine 5-carboxymethylaminomethyl modification enzyme MnmG"/>
    <property type="match status" value="1"/>
</dbReference>
<dbReference type="FunFam" id="3.50.50.60:FF:000002">
    <property type="entry name" value="tRNA uridine 5-carboxymethylaminomethyl modification enzyme MnmG"/>
    <property type="match status" value="1"/>
</dbReference>
<dbReference type="Gene3D" id="3.50.50.60">
    <property type="entry name" value="FAD/NAD(P)-binding domain"/>
    <property type="match status" value="2"/>
</dbReference>
<dbReference type="Gene3D" id="1.10.150.570">
    <property type="entry name" value="GidA associated domain, C-terminal subdomain"/>
    <property type="match status" value="1"/>
</dbReference>
<dbReference type="Gene3D" id="1.10.10.1800">
    <property type="entry name" value="tRNA uridine 5-carboxymethylaminomethyl modification enzyme MnmG/GidA"/>
    <property type="match status" value="1"/>
</dbReference>
<dbReference type="HAMAP" id="MF_00129">
    <property type="entry name" value="MnmG_GidA"/>
    <property type="match status" value="1"/>
</dbReference>
<dbReference type="InterPro" id="IPR036188">
    <property type="entry name" value="FAD/NAD-bd_sf"/>
</dbReference>
<dbReference type="InterPro" id="IPR049312">
    <property type="entry name" value="GIDA_C_N"/>
</dbReference>
<dbReference type="InterPro" id="IPR004416">
    <property type="entry name" value="MnmG"/>
</dbReference>
<dbReference type="InterPro" id="IPR002218">
    <property type="entry name" value="MnmG-rel"/>
</dbReference>
<dbReference type="InterPro" id="IPR020595">
    <property type="entry name" value="MnmG-rel_CS"/>
</dbReference>
<dbReference type="InterPro" id="IPR026904">
    <property type="entry name" value="MnmG_C"/>
</dbReference>
<dbReference type="InterPro" id="IPR047001">
    <property type="entry name" value="MnmG_C_subdom"/>
</dbReference>
<dbReference type="InterPro" id="IPR044920">
    <property type="entry name" value="MnmG_C_subdom_sf"/>
</dbReference>
<dbReference type="InterPro" id="IPR040131">
    <property type="entry name" value="MnmG_N"/>
</dbReference>
<dbReference type="NCBIfam" id="TIGR00136">
    <property type="entry name" value="mnmG_gidA"/>
    <property type="match status" value="1"/>
</dbReference>
<dbReference type="PANTHER" id="PTHR11806">
    <property type="entry name" value="GLUCOSE INHIBITED DIVISION PROTEIN A"/>
    <property type="match status" value="1"/>
</dbReference>
<dbReference type="PANTHER" id="PTHR11806:SF0">
    <property type="entry name" value="PROTEIN MTO1 HOMOLOG, MITOCHONDRIAL"/>
    <property type="match status" value="1"/>
</dbReference>
<dbReference type="Pfam" id="PF01134">
    <property type="entry name" value="GIDA"/>
    <property type="match status" value="1"/>
</dbReference>
<dbReference type="Pfam" id="PF21680">
    <property type="entry name" value="GIDA_C_1st"/>
    <property type="match status" value="1"/>
</dbReference>
<dbReference type="Pfam" id="PF13932">
    <property type="entry name" value="SAM_GIDA_C"/>
    <property type="match status" value="1"/>
</dbReference>
<dbReference type="SMART" id="SM01228">
    <property type="entry name" value="GIDA_assoc_3"/>
    <property type="match status" value="1"/>
</dbReference>
<dbReference type="SUPFAM" id="SSF51905">
    <property type="entry name" value="FAD/NAD(P)-binding domain"/>
    <property type="match status" value="1"/>
</dbReference>
<dbReference type="PROSITE" id="PS01280">
    <property type="entry name" value="GIDA_1"/>
    <property type="match status" value="1"/>
</dbReference>
<dbReference type="PROSITE" id="PS01281">
    <property type="entry name" value="GIDA_2"/>
    <property type="match status" value="1"/>
</dbReference>
<accession>Q8RAT8</accession>
<keyword id="KW-0963">Cytoplasm</keyword>
<keyword id="KW-0274">FAD</keyword>
<keyword id="KW-0285">Flavoprotein</keyword>
<keyword id="KW-0520">NAD</keyword>
<keyword id="KW-1185">Reference proteome</keyword>
<keyword id="KW-0819">tRNA processing</keyword>
<comment type="function">
    <text evidence="1">NAD-binding protein involved in the addition of a carboxymethylaminomethyl (cmnm) group at the wobble position (U34) of certain tRNAs, forming tRNA-cmnm(5)s(2)U34.</text>
</comment>
<comment type="cofactor">
    <cofactor evidence="1">
        <name>FAD</name>
        <dbReference type="ChEBI" id="CHEBI:57692"/>
    </cofactor>
</comment>
<comment type="subunit">
    <text evidence="1">Homodimer. Heterotetramer of two MnmE and two MnmG subunits.</text>
</comment>
<comment type="subcellular location">
    <subcellularLocation>
        <location evidence="1">Cytoplasm</location>
    </subcellularLocation>
</comment>
<comment type="similarity">
    <text evidence="1">Belongs to the MnmG family.</text>
</comment>
<reference key="1">
    <citation type="journal article" date="2002" name="Genome Res.">
        <title>A complete sequence of the T. tengcongensis genome.</title>
        <authorList>
            <person name="Bao Q."/>
            <person name="Tian Y."/>
            <person name="Li W."/>
            <person name="Xu Z."/>
            <person name="Xuan Z."/>
            <person name="Hu S."/>
            <person name="Dong W."/>
            <person name="Yang J."/>
            <person name="Chen Y."/>
            <person name="Xue Y."/>
            <person name="Xu Y."/>
            <person name="Lai X."/>
            <person name="Huang L."/>
            <person name="Dong X."/>
            <person name="Ma Y."/>
            <person name="Ling L."/>
            <person name="Tan H."/>
            <person name="Chen R."/>
            <person name="Wang J."/>
            <person name="Yu J."/>
            <person name="Yang H."/>
        </authorList>
    </citation>
    <scope>NUCLEOTIDE SEQUENCE [LARGE SCALE GENOMIC DNA]</scope>
    <source>
        <strain>DSM 15242 / JCM 11007 / NBRC 100824 / MB4</strain>
    </source>
</reference>
<name>MNMG1_CALS4</name>
<organism>
    <name type="scientific">Caldanaerobacter subterraneus subsp. tengcongensis (strain DSM 15242 / JCM 11007 / NBRC 100824 / MB4)</name>
    <name type="common">Thermoanaerobacter tengcongensis</name>
    <dbReference type="NCBI Taxonomy" id="273068"/>
    <lineage>
        <taxon>Bacteria</taxon>
        <taxon>Bacillati</taxon>
        <taxon>Bacillota</taxon>
        <taxon>Clostridia</taxon>
        <taxon>Thermoanaerobacterales</taxon>
        <taxon>Thermoanaerobacteraceae</taxon>
        <taxon>Caldanaerobacter</taxon>
    </lineage>
</organism>
<proteinExistence type="inferred from homology"/>
<protein>
    <recommendedName>
        <fullName evidence="1">tRNA uridine 5-carboxymethylaminomethyl modification enzyme MnmG 1</fullName>
    </recommendedName>
    <alternativeName>
        <fullName evidence="1">Glucose-inhibited division protein A 1</fullName>
    </alternativeName>
</protein>
<evidence type="ECO:0000255" key="1">
    <source>
        <dbReference type="HAMAP-Rule" id="MF_00129"/>
    </source>
</evidence>
<gene>
    <name evidence="1" type="primary">mnmG1</name>
    <name evidence="1" type="synonym">gidA1</name>
    <name type="ordered locus">TTE1110</name>
</gene>